<accession>C0RFF2</accession>
<name>RL19_BRUMB</name>
<comment type="function">
    <text evidence="1">This protein is located at the 30S-50S ribosomal subunit interface and may play a role in the structure and function of the aminoacyl-tRNA binding site.</text>
</comment>
<comment type="similarity">
    <text evidence="1">Belongs to the bacterial ribosomal protein bL19 family.</text>
</comment>
<evidence type="ECO:0000255" key="1">
    <source>
        <dbReference type="HAMAP-Rule" id="MF_00402"/>
    </source>
</evidence>
<evidence type="ECO:0000305" key="2"/>
<organism>
    <name type="scientific">Brucella melitensis biotype 2 (strain ATCC 23457)</name>
    <dbReference type="NCBI Taxonomy" id="546272"/>
    <lineage>
        <taxon>Bacteria</taxon>
        <taxon>Pseudomonadati</taxon>
        <taxon>Pseudomonadota</taxon>
        <taxon>Alphaproteobacteria</taxon>
        <taxon>Hyphomicrobiales</taxon>
        <taxon>Brucellaceae</taxon>
        <taxon>Brucella/Ochrobactrum group</taxon>
        <taxon>Brucella</taxon>
    </lineage>
</organism>
<feature type="chain" id="PRO_1000134558" description="Large ribosomal subunit protein bL19">
    <location>
        <begin position="1"/>
        <end position="145"/>
    </location>
</feature>
<dbReference type="EMBL" id="CP001488">
    <property type="protein sequence ID" value="ACO01624.1"/>
    <property type="molecule type" value="Genomic_DNA"/>
</dbReference>
<dbReference type="RefSeq" id="WP_002964975.1">
    <property type="nucleotide sequence ID" value="NC_012441.1"/>
</dbReference>
<dbReference type="SMR" id="C0RFF2"/>
<dbReference type="GeneID" id="97534805"/>
<dbReference type="KEGG" id="bmi:BMEA_A1962"/>
<dbReference type="HOGENOM" id="CLU_103507_0_2_5"/>
<dbReference type="PRO" id="PR:C0RFF2"/>
<dbReference type="Proteomes" id="UP000001748">
    <property type="component" value="Chromosome I"/>
</dbReference>
<dbReference type="GO" id="GO:0022625">
    <property type="term" value="C:cytosolic large ribosomal subunit"/>
    <property type="evidence" value="ECO:0007669"/>
    <property type="project" value="TreeGrafter"/>
</dbReference>
<dbReference type="GO" id="GO:0003735">
    <property type="term" value="F:structural constituent of ribosome"/>
    <property type="evidence" value="ECO:0007669"/>
    <property type="project" value="InterPro"/>
</dbReference>
<dbReference type="GO" id="GO:0006412">
    <property type="term" value="P:translation"/>
    <property type="evidence" value="ECO:0007669"/>
    <property type="project" value="UniProtKB-UniRule"/>
</dbReference>
<dbReference type="FunFam" id="2.30.30.790:FF:000001">
    <property type="entry name" value="50S ribosomal protein L19"/>
    <property type="match status" value="1"/>
</dbReference>
<dbReference type="Gene3D" id="2.30.30.790">
    <property type="match status" value="1"/>
</dbReference>
<dbReference type="HAMAP" id="MF_00402">
    <property type="entry name" value="Ribosomal_bL19"/>
    <property type="match status" value="1"/>
</dbReference>
<dbReference type="InterPro" id="IPR001857">
    <property type="entry name" value="Ribosomal_bL19"/>
</dbReference>
<dbReference type="InterPro" id="IPR018257">
    <property type="entry name" value="Ribosomal_bL19_CS"/>
</dbReference>
<dbReference type="InterPro" id="IPR038657">
    <property type="entry name" value="Ribosomal_bL19_sf"/>
</dbReference>
<dbReference type="InterPro" id="IPR008991">
    <property type="entry name" value="Translation_prot_SH3-like_sf"/>
</dbReference>
<dbReference type="NCBIfam" id="TIGR01024">
    <property type="entry name" value="rplS_bact"/>
    <property type="match status" value="1"/>
</dbReference>
<dbReference type="PANTHER" id="PTHR15680:SF9">
    <property type="entry name" value="LARGE RIBOSOMAL SUBUNIT PROTEIN BL19M"/>
    <property type="match status" value="1"/>
</dbReference>
<dbReference type="PANTHER" id="PTHR15680">
    <property type="entry name" value="RIBOSOMAL PROTEIN L19"/>
    <property type="match status" value="1"/>
</dbReference>
<dbReference type="Pfam" id="PF01245">
    <property type="entry name" value="Ribosomal_L19"/>
    <property type="match status" value="1"/>
</dbReference>
<dbReference type="PIRSF" id="PIRSF002191">
    <property type="entry name" value="Ribosomal_L19"/>
    <property type="match status" value="1"/>
</dbReference>
<dbReference type="PRINTS" id="PR00061">
    <property type="entry name" value="RIBOSOMALL19"/>
</dbReference>
<dbReference type="SUPFAM" id="SSF50104">
    <property type="entry name" value="Translation proteins SH3-like domain"/>
    <property type="match status" value="1"/>
</dbReference>
<dbReference type="PROSITE" id="PS01015">
    <property type="entry name" value="RIBOSOMAL_L19"/>
    <property type="match status" value="1"/>
</dbReference>
<gene>
    <name evidence="1" type="primary">rplS</name>
    <name type="ordered locus">BMEA_A1962</name>
</gene>
<reference key="1">
    <citation type="submission" date="2009-03" db="EMBL/GenBank/DDBJ databases">
        <title>Brucella melitensis ATCC 23457 whole genome shotgun sequencing project.</title>
        <authorList>
            <person name="Setubal J.C."/>
            <person name="Boyle S."/>
            <person name="Crasta O.R."/>
            <person name="Gillespie J.J."/>
            <person name="Kenyon R.W."/>
            <person name="Lu J."/>
            <person name="Mane S."/>
            <person name="Nagrani S."/>
            <person name="Shallom J.M."/>
            <person name="Shallom S."/>
            <person name="Shukla M."/>
            <person name="Snyder E.E."/>
            <person name="Sobral B.W."/>
            <person name="Wattam A.R."/>
            <person name="Will R."/>
            <person name="Williams K."/>
            <person name="Yoo H."/>
            <person name="Munk C."/>
            <person name="Tapia R."/>
            <person name="Han C."/>
            <person name="Detter J.C."/>
            <person name="Bruce D."/>
            <person name="Brettin T.S."/>
        </authorList>
    </citation>
    <scope>NUCLEOTIDE SEQUENCE [LARGE SCALE GENOMIC DNA]</scope>
    <source>
        <strain>ATCC 23457</strain>
    </source>
</reference>
<sequence length="145" mass="16077">MTDIIRQLEAEQAAKIEEKRKLPDFQPGDTVRVQVRVTEGTRTRVQAYEGVCIARSGAGLNENFTVRKISYGEGVERVFPVYSPIVEGVEVVRRGKVRRAKLYYLRGLTGKAARIAEKKDNRTKAERAADKLAAAKAEAAKTAAE</sequence>
<proteinExistence type="inferred from homology"/>
<keyword id="KW-0687">Ribonucleoprotein</keyword>
<keyword id="KW-0689">Ribosomal protein</keyword>
<protein>
    <recommendedName>
        <fullName evidence="1">Large ribosomal subunit protein bL19</fullName>
    </recommendedName>
    <alternativeName>
        <fullName evidence="2">50S ribosomal protein L19</fullName>
    </alternativeName>
</protein>